<name>XPB_MYCTU</name>
<accession>O53873</accession>
<accession>F2GIZ2</accession>
<accession>I6WZM2</accession>
<evidence type="ECO:0000255" key="1">
    <source>
        <dbReference type="PROSITE-ProRule" id="PRU00541"/>
    </source>
</evidence>
<evidence type="ECO:0000255" key="2">
    <source>
        <dbReference type="PROSITE-ProRule" id="PRU00542"/>
    </source>
</evidence>
<evidence type="ECO:0000269" key="3">
    <source>
    </source>
</evidence>
<evidence type="ECO:0000269" key="4">
    <source>
    </source>
</evidence>
<evidence type="ECO:0000269" key="5">
    <source>
    </source>
</evidence>
<evidence type="ECO:0000303" key="6">
    <source>
    </source>
</evidence>
<evidence type="ECO:0000305" key="7"/>
<evidence type="ECO:0000312" key="8">
    <source>
        <dbReference type="EMBL" id="CCP43609.1"/>
    </source>
</evidence>
<evidence type="ECO:0007744" key="9">
    <source>
    </source>
</evidence>
<sequence>MTDGPLIVQSDKTVLLEVDHELAGAARAAIAPFAELERAPEHVHTYRITPLALWNARAAGHDAEQVVDALVSYSRYAVPQPLLVDIVDTMARYGRLQLVKNPAHGLTLVSLDRAVLEEVLRNKKIAPMLGARIDDDTVVVHPSERGRVKQLLLKIGWPAEDLAGYVDGEAHPISLHQEGWQLRDYQRLAADSFWAGGSGVVVLPCGAGKTLVGAAAMAKAGATTLILVTNIVAARQWKRELVARTSLTENEIGEFSGERKEIRPVTISTYQMITRRTKGEYRHLELFDSRDWGLIIYDEVHLLPAPVFRMTADLQSKRRLGLTATLIREDGREGDVFSLIGPKRYDAPWKDIEAQGWIAPAECVEVRVTMTDSERMMYATAEPEERYRICSTVHTKIAVVKSILAKHPDEQTLVIGAYLDQLDELGAELGAPVIQGSTRTSEREALFDAFRRGEVATLVVSKVANFSIDLPEAAVAVQVSGTFGSRQEEAQRLGRILRPKADGGGAIFYSVVARDSLDAEYAAHRQRFLAEQGYGYIIRDADDLLGPAI</sequence>
<organism>
    <name type="scientific">Mycobacterium tuberculosis (strain ATCC 25618 / H37Rv)</name>
    <dbReference type="NCBI Taxonomy" id="83332"/>
    <lineage>
        <taxon>Bacteria</taxon>
        <taxon>Bacillati</taxon>
        <taxon>Actinomycetota</taxon>
        <taxon>Actinomycetes</taxon>
        <taxon>Mycobacteriales</taxon>
        <taxon>Mycobacteriaceae</taxon>
        <taxon>Mycobacterium</taxon>
        <taxon>Mycobacterium tuberculosis complex</taxon>
    </lineage>
</organism>
<gene>
    <name evidence="6" type="primary">XPB</name>
    <name evidence="8" type="synonym">ercc3</name>
    <name evidence="8" type="ordered locus">Rv0861c</name>
</gene>
<feature type="chain" id="PRO_0000455759" description="DNA 3'-5' helicase XPB">
    <location>
        <begin position="1"/>
        <end position="549"/>
    </location>
</feature>
<feature type="domain" description="Helicase ATP-binding" evidence="1">
    <location>
        <begin position="190"/>
        <end position="344"/>
    </location>
</feature>
<feature type="domain" description="Helicase C-terminal" evidence="2">
    <location>
        <begin position="399"/>
        <end position="545"/>
    </location>
</feature>
<feature type="region of interest" description="Required for protein stability or solubility" evidence="3">
    <location>
        <begin position="1"/>
        <end position="130"/>
    </location>
</feature>
<feature type="short sequence motif" description="DEAH box" evidence="1">
    <location>
        <begin position="298"/>
        <end position="301"/>
    </location>
</feature>
<feature type="binding site" evidence="1">
    <location>
        <begin position="203"/>
        <end position="210"/>
    </location>
    <ligand>
        <name>ATP</name>
        <dbReference type="ChEBI" id="CHEBI:30616"/>
    </ligand>
</feature>
<feature type="mutagenesis site" description="Loss of ATPase activity." evidence="3">
    <original>K</original>
    <variation>E</variation>
    <variation>R</variation>
    <location>
        <position position="209"/>
    </location>
</feature>
<feature type="mutagenesis site" description="Loss of ATPase activity." evidence="3">
    <original>E</original>
    <variation>A</variation>
    <location>
        <position position="299"/>
    </location>
</feature>
<dbReference type="EC" id="5.6.2.4" evidence="3 4"/>
<dbReference type="EMBL" id="AL123456">
    <property type="protein sequence ID" value="CCP43609.1"/>
    <property type="status" value="ALT_INIT"/>
    <property type="molecule type" value="Genomic_DNA"/>
</dbReference>
<dbReference type="RefSeq" id="NP_215376.3">
    <property type="nucleotide sequence ID" value="NC_000962.3"/>
</dbReference>
<dbReference type="RefSeq" id="WP_003404428.1">
    <property type="nucleotide sequence ID" value="NC_000962.3"/>
</dbReference>
<dbReference type="RefSeq" id="WP_003913615.1">
    <property type="nucleotide sequence ID" value="NZ_NVQJ01000040.1"/>
</dbReference>
<dbReference type="SMR" id="O53873"/>
<dbReference type="FunCoup" id="O53873">
    <property type="interactions" value="256"/>
</dbReference>
<dbReference type="STRING" id="83332.Rv0861c"/>
<dbReference type="PaxDb" id="83332-Rv0861c"/>
<dbReference type="GeneID" id="885425"/>
<dbReference type="KEGG" id="mtu:Rv0861c"/>
<dbReference type="PATRIC" id="fig|83332.111.peg.953"/>
<dbReference type="TubercuList" id="Rv0861c"/>
<dbReference type="eggNOG" id="COG1061">
    <property type="taxonomic scope" value="Bacteria"/>
</dbReference>
<dbReference type="InParanoid" id="O53873"/>
<dbReference type="OrthoDB" id="3713880at2"/>
<dbReference type="PhylomeDB" id="O53873"/>
<dbReference type="Proteomes" id="UP000001584">
    <property type="component" value="Chromosome"/>
</dbReference>
<dbReference type="GO" id="GO:0009274">
    <property type="term" value="C:peptidoglycan-based cell wall"/>
    <property type="evidence" value="ECO:0007005"/>
    <property type="project" value="MTBBASE"/>
</dbReference>
<dbReference type="GO" id="GO:0005886">
    <property type="term" value="C:plasma membrane"/>
    <property type="evidence" value="ECO:0007005"/>
    <property type="project" value="MTBBASE"/>
</dbReference>
<dbReference type="GO" id="GO:0005524">
    <property type="term" value="F:ATP binding"/>
    <property type="evidence" value="ECO:0007669"/>
    <property type="project" value="UniProtKB-KW"/>
</dbReference>
<dbReference type="GO" id="GO:0003677">
    <property type="term" value="F:DNA binding"/>
    <property type="evidence" value="ECO:0007669"/>
    <property type="project" value="UniProtKB-KW"/>
</dbReference>
<dbReference type="GO" id="GO:0004386">
    <property type="term" value="F:helicase activity"/>
    <property type="evidence" value="ECO:0007669"/>
    <property type="project" value="UniProtKB-KW"/>
</dbReference>
<dbReference type="GO" id="GO:0016787">
    <property type="term" value="F:hydrolase activity"/>
    <property type="evidence" value="ECO:0007669"/>
    <property type="project" value="UniProtKB-KW"/>
</dbReference>
<dbReference type="CDD" id="cd18029">
    <property type="entry name" value="DEXHc_XPB"/>
    <property type="match status" value="1"/>
</dbReference>
<dbReference type="CDD" id="cd18789">
    <property type="entry name" value="SF2_C_XPB"/>
    <property type="match status" value="1"/>
</dbReference>
<dbReference type="FunFam" id="3.40.50.300:FF:001400">
    <property type="entry name" value="DNA helicase"/>
    <property type="match status" value="1"/>
</dbReference>
<dbReference type="FunFam" id="3.40.50.300:FF:001564">
    <property type="entry name" value="DNA helicase Ercc3"/>
    <property type="match status" value="1"/>
</dbReference>
<dbReference type="Gene3D" id="3.40.50.300">
    <property type="entry name" value="P-loop containing nucleotide triphosphate hydrolases"/>
    <property type="match status" value="2"/>
</dbReference>
<dbReference type="InterPro" id="IPR050615">
    <property type="entry name" value="ATP-dep_DNA_Helicase"/>
</dbReference>
<dbReference type="InterPro" id="IPR032438">
    <property type="entry name" value="ERCC3_RAD25_C"/>
</dbReference>
<dbReference type="InterPro" id="IPR006935">
    <property type="entry name" value="Helicase/UvrB_N"/>
</dbReference>
<dbReference type="InterPro" id="IPR014001">
    <property type="entry name" value="Helicase_ATP-bd"/>
</dbReference>
<dbReference type="InterPro" id="IPR001650">
    <property type="entry name" value="Helicase_C-like"/>
</dbReference>
<dbReference type="InterPro" id="IPR027417">
    <property type="entry name" value="P-loop_NTPase"/>
</dbReference>
<dbReference type="InterPro" id="IPR032830">
    <property type="entry name" value="XPB/Ssl2_N"/>
</dbReference>
<dbReference type="NCBIfam" id="NF045503">
    <property type="entry name" value="repair_heli_XPB"/>
    <property type="match status" value="1"/>
</dbReference>
<dbReference type="PANTHER" id="PTHR11274:SF0">
    <property type="entry name" value="GENERAL TRANSCRIPTION AND DNA REPAIR FACTOR IIH HELICASE SUBUNIT XPB"/>
    <property type="match status" value="1"/>
</dbReference>
<dbReference type="PANTHER" id="PTHR11274">
    <property type="entry name" value="RAD25/XP-B DNA REPAIR HELICASE"/>
    <property type="match status" value="1"/>
</dbReference>
<dbReference type="Pfam" id="PF16203">
    <property type="entry name" value="ERCC3_RAD25_C"/>
    <property type="match status" value="1"/>
</dbReference>
<dbReference type="Pfam" id="PF13625">
    <property type="entry name" value="Helicase_C_3"/>
    <property type="match status" value="1"/>
</dbReference>
<dbReference type="Pfam" id="PF04851">
    <property type="entry name" value="ResIII"/>
    <property type="match status" value="1"/>
</dbReference>
<dbReference type="PRINTS" id="PR00851">
    <property type="entry name" value="XRODRMPGMNTB"/>
</dbReference>
<dbReference type="SMART" id="SM00487">
    <property type="entry name" value="DEXDc"/>
    <property type="match status" value="1"/>
</dbReference>
<dbReference type="SMART" id="SM00490">
    <property type="entry name" value="HELICc"/>
    <property type="match status" value="1"/>
</dbReference>
<dbReference type="SUPFAM" id="SSF52540">
    <property type="entry name" value="P-loop containing nucleoside triphosphate hydrolases"/>
    <property type="match status" value="2"/>
</dbReference>
<dbReference type="PROSITE" id="PS51192">
    <property type="entry name" value="HELICASE_ATP_BIND_1"/>
    <property type="match status" value="1"/>
</dbReference>
<dbReference type="PROSITE" id="PS51194">
    <property type="entry name" value="HELICASE_CTER"/>
    <property type="match status" value="1"/>
</dbReference>
<protein>
    <recommendedName>
        <fullName evidence="6">DNA 3'-5' helicase XPB</fullName>
        <ecNumber evidence="3 4">5.6.2.4</ecNumber>
    </recommendedName>
</protein>
<proteinExistence type="evidence at protein level"/>
<keyword id="KW-0067">ATP-binding</keyword>
<keyword id="KW-0903">Direct protein sequencing</keyword>
<keyword id="KW-0238">DNA-binding</keyword>
<keyword id="KW-0347">Helicase</keyword>
<keyword id="KW-0378">Hydrolase</keyword>
<keyword id="KW-0413">Isomerase</keyword>
<keyword id="KW-0460">Magnesium</keyword>
<keyword id="KW-0464">Manganese</keyword>
<keyword id="KW-0547">Nucleotide-binding</keyword>
<keyword id="KW-1185">Reference proteome</keyword>
<comment type="function">
    <text evidence="3 4">ATP-dependent 3'-5' DNA helicase, unwinds 3'-overhangs, 3'- flaps, and splayed-arm DNA substrates but not 5'-overhangs, 5'-flap substrates, 3-way junctions or Holliday junctions. Not highly efficient in vitro (PubMed:19199647, PubMed:22615856). Requires ATP hydrolysis for helicase activity; the ATPase activity is DNA-dependent and requires a minimum of 4 single-stranded nucleotides (nt) with 6-10 nt providing all necessary interactions for full processive unwinding. The ATPase prefers ATP over CTP or GTP, is almost inactive with TTP (PubMed:19199647). DNA helicase activity requires ATP or dATP and only acts when the 3'-overhang is &gt;20 nt. Capable of unwinding a DNA:RNA hybrid if the 3'-overhang is DNA. Also catalyzes ATP-independent annealing of complementary DNA strands; annealing requires Mg(2+) (PubMed:22615856).</text>
</comment>
<comment type="catalytic activity">
    <reaction evidence="3 4">
        <text>Couples ATP hydrolysis with the unwinding of duplex DNA by translocating in the 3'-5' direction.</text>
        <dbReference type="EC" id="5.6.2.4"/>
    </reaction>
</comment>
<comment type="catalytic activity">
    <reaction evidence="3 4">
        <text>ATP + H2O = ADP + phosphate + H(+)</text>
        <dbReference type="Rhea" id="RHEA:13065"/>
        <dbReference type="ChEBI" id="CHEBI:15377"/>
        <dbReference type="ChEBI" id="CHEBI:15378"/>
        <dbReference type="ChEBI" id="CHEBI:30616"/>
        <dbReference type="ChEBI" id="CHEBI:43474"/>
        <dbReference type="ChEBI" id="CHEBI:456216"/>
        <dbReference type="EC" id="5.6.2.4"/>
    </reaction>
</comment>
<comment type="cofactor">
    <cofactor evidence="3 4">
        <name>Mn(2+)</name>
        <dbReference type="ChEBI" id="CHEBI:29035"/>
    </cofactor>
    <cofactor evidence="3 4">
        <name>Mg(2+)</name>
        <dbReference type="ChEBI" id="CHEBI:18420"/>
    </cofactor>
    <text evidence="3 4">ATPase activity has a small preference for Mn(2+) over Mg(2+), Ca(2+) supports ATPase activity less well. Co(2+) and Zn(2+) are inactive (PubMed:19199647). Another study shows equal activity with Mg(2+) and Mn(2+), none with Ca(2+) (PubMed:22615856).</text>
</comment>
<comment type="biophysicochemical properties">
    <kinetics>
        <KM evidence="3">50 nM for 21-mer ssDNA substrate</KM>
        <KM evidence="3">22 uM for 10-mer ssDNA substrate</KM>
        <text evidence="3">kcat is 10 sec(-1) on a ssDNA 21-mer and about 50 sec(-1) on ssDNA 5kb template.</text>
    </kinetics>
</comment>
<comment type="subunit">
    <text evidence="3">Monomer.</text>
</comment>
<comment type="domain">
    <text evidence="3">Removal of the N-terminus decreases solubility and/or structural integrity of the protein.</text>
</comment>
<comment type="similarity">
    <text evidence="7">Belongs to the helicase family. RAD25/XPB subfamily.</text>
</comment>
<comment type="sequence caution" evidence="5">
    <conflict type="erroneous initiation">
        <sequence resource="EMBL-CDS" id="CCP43609"/>
    </conflict>
    <text>Truncated N-terminus.</text>
</comment>
<reference evidence="8" key="1">
    <citation type="journal article" date="1998" name="Nature">
        <title>Deciphering the biology of Mycobacterium tuberculosis from the complete genome sequence.</title>
        <authorList>
            <person name="Cole S.T."/>
            <person name="Brosch R."/>
            <person name="Parkhill J."/>
            <person name="Garnier T."/>
            <person name="Churcher C.M."/>
            <person name="Harris D.E."/>
            <person name="Gordon S.V."/>
            <person name="Eiglmeier K."/>
            <person name="Gas S."/>
            <person name="Barry C.E. III"/>
            <person name="Tekaia F."/>
            <person name="Badcock K."/>
            <person name="Basham D."/>
            <person name="Brown D."/>
            <person name="Chillingworth T."/>
            <person name="Connor R."/>
            <person name="Davies R.M."/>
            <person name="Devlin K."/>
            <person name="Feltwell T."/>
            <person name="Gentles S."/>
            <person name="Hamlin N."/>
            <person name="Holroyd S."/>
            <person name="Hornsby T."/>
            <person name="Jagels K."/>
            <person name="Krogh A."/>
            <person name="McLean J."/>
            <person name="Moule S."/>
            <person name="Murphy L.D."/>
            <person name="Oliver S."/>
            <person name="Osborne J."/>
            <person name="Quail M.A."/>
            <person name="Rajandream M.A."/>
            <person name="Rogers J."/>
            <person name="Rutter S."/>
            <person name="Seeger K."/>
            <person name="Skelton S."/>
            <person name="Squares S."/>
            <person name="Squares R."/>
            <person name="Sulston J.E."/>
            <person name="Taylor K."/>
            <person name="Whitehead S."/>
            <person name="Barrell B.G."/>
        </authorList>
    </citation>
    <scope>NUCLEOTIDE SEQUENCE [LARGE SCALE GENOMIC DNA]</scope>
    <source>
        <strain>ATCC 25618 / H37Rv</strain>
    </source>
</reference>
<reference key="2">
    <citation type="journal article" date="2022" name="Genomics">
        <title>Deep N-terminomics of Mycobacterium tuberculosis H37Rv extensively correct annotated encoding genes.</title>
        <authorList>
            <person name="Shi J."/>
            <person name="Meng S."/>
            <person name="Wan L."/>
            <person name="Zhang Z."/>
            <person name="Jiang S."/>
            <person name="Zhu H."/>
            <person name="Dai E."/>
            <person name="Chang L."/>
            <person name="Gao H."/>
            <person name="Wan K."/>
            <person name="Zhang L."/>
            <person name="Zhao X."/>
            <person name="Liu H."/>
            <person name="Lyu Z."/>
            <person name="Zhang Y."/>
            <person name="Xu P."/>
        </authorList>
    </citation>
    <scope>PROTEIN SEQUENCE OF 2-27</scope>
    <scope>SEQUENCE REVISION TO N-TERMINUS</scope>
    <source>
        <strain>H37Rv</strain>
    </source>
</reference>
<reference key="3">
    <citation type="journal article" date="2009" name="Biochemistry">
        <title>DNA-dependent ATPase activity of bacterial XPB helicases.</title>
        <authorList>
            <person name="Biswas T."/>
            <person name="Pero J.M."/>
            <person name="Joseph C.G."/>
            <person name="Tsodikov O.V."/>
        </authorList>
    </citation>
    <scope>FUNCTION</scope>
    <scope>CATALYTIC ACTIVITY</scope>
    <scope>COFACTOR</scope>
    <scope>BIOPHYSICOCHEMICAL PROPERTIES</scope>
    <scope>SUBUNIT</scope>
    <scope>DOMAIN</scope>
    <scope>DNA-BINDING</scope>
    <scope>MUTAGENESIS OF LYS-209 AND GLU-299</scope>
    <source>
        <strain>H37Rv</strain>
    </source>
</reference>
<reference evidence="9" key="4">
    <citation type="journal article" date="2011" name="Mol. Cell. Proteomics">
        <title>Proteogenomic analysis of Mycobacterium tuberculosis by high resolution mass spectrometry.</title>
        <authorList>
            <person name="Kelkar D.S."/>
            <person name="Kumar D."/>
            <person name="Kumar P."/>
            <person name="Balakrishnan L."/>
            <person name="Muthusamy B."/>
            <person name="Yadav A.K."/>
            <person name="Shrivastava P."/>
            <person name="Marimuthu A."/>
            <person name="Anand S."/>
            <person name="Sundaram H."/>
            <person name="Kingsbury R."/>
            <person name="Harsha H.C."/>
            <person name="Nair B."/>
            <person name="Prasad T.S."/>
            <person name="Chauhan D.S."/>
            <person name="Katoch K."/>
            <person name="Katoch V.M."/>
            <person name="Kumar P."/>
            <person name="Chaerkady R."/>
            <person name="Ramachandran S."/>
            <person name="Dash D."/>
            <person name="Pandey A."/>
        </authorList>
    </citation>
    <scope>IDENTIFICATION BY MASS SPECTROMETRY [LARGE SCALE ANALYSIS]</scope>
    <source>
        <strain>ATCC 25618 / H37Rv</strain>
    </source>
</reference>
<reference key="5">
    <citation type="journal article" date="2012" name="PLoS ONE">
        <title>Enzymatic activities and DNA substrate specificity of Mycobacterium tuberculosis DNA helicase XPB.</title>
        <authorList>
            <person name="Balasingham S.V."/>
            <person name="Zegeye E.D."/>
            <person name="Homberset H."/>
            <person name="Rossi M.L."/>
            <person name="Laerdahl J.K."/>
            <person name="Bohr V.A."/>
            <person name="Toenjum T."/>
        </authorList>
    </citation>
    <scope>FUNCTION</scope>
    <scope>CATALYTIC ACTIVITY</scope>
    <scope>COFACTOR</scope>
    <scope>DNA-BINDING</scope>
    <source>
        <strain>ATCC 25618 / H37Rv</strain>
    </source>
</reference>